<feature type="chain" id="PRO_1000203731" description="ATP-dependent Clp protease ATP-binding subunit ClpX">
    <location>
        <begin position="1"/>
        <end position="422"/>
    </location>
</feature>
<feature type="domain" description="ClpX-type ZB" evidence="2">
    <location>
        <begin position="1"/>
        <end position="54"/>
    </location>
</feature>
<feature type="binding site" evidence="2">
    <location>
        <position position="12"/>
    </location>
    <ligand>
        <name>Zn(2+)</name>
        <dbReference type="ChEBI" id="CHEBI:29105"/>
    </ligand>
</feature>
<feature type="binding site" evidence="2">
    <location>
        <position position="15"/>
    </location>
    <ligand>
        <name>Zn(2+)</name>
        <dbReference type="ChEBI" id="CHEBI:29105"/>
    </ligand>
</feature>
<feature type="binding site" evidence="2">
    <location>
        <position position="35"/>
    </location>
    <ligand>
        <name>Zn(2+)</name>
        <dbReference type="ChEBI" id="CHEBI:29105"/>
    </ligand>
</feature>
<feature type="binding site" evidence="2">
    <location>
        <position position="38"/>
    </location>
    <ligand>
        <name>Zn(2+)</name>
        <dbReference type="ChEBI" id="CHEBI:29105"/>
    </ligand>
</feature>
<feature type="binding site" evidence="1">
    <location>
        <begin position="122"/>
        <end position="129"/>
    </location>
    <ligand>
        <name>ATP</name>
        <dbReference type="ChEBI" id="CHEBI:30616"/>
    </ligand>
</feature>
<proteinExistence type="inferred from homology"/>
<gene>
    <name evidence="1" type="primary">clpX</name>
    <name type="ordered locus">EUBELI_01453</name>
</gene>
<reference key="1">
    <citation type="journal article" date="2009" name="Proc. Natl. Acad. Sci. U.S.A.">
        <title>Characterizing a model human gut microbiota composed of members of its two dominant bacterial phyla.</title>
        <authorList>
            <person name="Mahowald M.A."/>
            <person name="Rey F.E."/>
            <person name="Seedorf H."/>
            <person name="Turnbaugh P.J."/>
            <person name="Fulton R.S."/>
            <person name="Wollam A."/>
            <person name="Shah N."/>
            <person name="Wang C."/>
            <person name="Magrini V."/>
            <person name="Wilson R.K."/>
            <person name="Cantarel B.L."/>
            <person name="Coutinho P.M."/>
            <person name="Henrissat B."/>
            <person name="Crock L.W."/>
            <person name="Russell A."/>
            <person name="Verberkmoes N.C."/>
            <person name="Hettich R.L."/>
            <person name="Gordon J.I."/>
        </authorList>
    </citation>
    <scope>NUCLEOTIDE SEQUENCE [LARGE SCALE GENOMIC DNA]</scope>
    <source>
        <strain>ATCC 27750 / DSM 3376 / VPI C15-48 / C15-B4</strain>
    </source>
</reference>
<comment type="function">
    <text evidence="1">ATP-dependent specificity component of the Clp protease. It directs the protease to specific substrates. Can perform chaperone functions in the absence of ClpP.</text>
</comment>
<comment type="subunit">
    <text evidence="1">Component of the ClpX-ClpP complex. Forms a hexameric ring that, in the presence of ATP, binds to fourteen ClpP subunits assembled into a disk-like structure with a central cavity, resembling the structure of eukaryotic proteasomes.</text>
</comment>
<comment type="similarity">
    <text evidence="1">Belongs to the ClpX chaperone family.</text>
</comment>
<name>CLPX_LACE2</name>
<accession>C4Z1T5</accession>
<keyword id="KW-0067">ATP-binding</keyword>
<keyword id="KW-0143">Chaperone</keyword>
<keyword id="KW-0479">Metal-binding</keyword>
<keyword id="KW-0547">Nucleotide-binding</keyword>
<keyword id="KW-1185">Reference proteome</keyword>
<keyword id="KW-0862">Zinc</keyword>
<protein>
    <recommendedName>
        <fullName evidence="1">ATP-dependent Clp protease ATP-binding subunit ClpX</fullName>
    </recommendedName>
</protein>
<organism>
    <name type="scientific">Lachnospira eligens (strain ATCC 27750 / DSM 3376 / VPI C15-48 / C15-B4)</name>
    <name type="common">Eubacterium eligens</name>
    <dbReference type="NCBI Taxonomy" id="515620"/>
    <lineage>
        <taxon>Bacteria</taxon>
        <taxon>Bacillati</taxon>
        <taxon>Bacillota</taxon>
        <taxon>Clostridia</taxon>
        <taxon>Lachnospirales</taxon>
        <taxon>Lachnospiraceae</taxon>
        <taxon>Lachnospira</taxon>
    </lineage>
</organism>
<evidence type="ECO:0000255" key="1">
    <source>
        <dbReference type="HAMAP-Rule" id="MF_00175"/>
    </source>
</evidence>
<evidence type="ECO:0000255" key="2">
    <source>
        <dbReference type="PROSITE-ProRule" id="PRU01250"/>
    </source>
</evidence>
<dbReference type="EMBL" id="CP001104">
    <property type="protein sequence ID" value="ACR72446.1"/>
    <property type="molecule type" value="Genomic_DNA"/>
</dbReference>
<dbReference type="RefSeq" id="WP_012739681.1">
    <property type="nucleotide sequence ID" value="NC_012778.1"/>
</dbReference>
<dbReference type="SMR" id="C4Z1T5"/>
<dbReference type="STRING" id="515620.EUBELI_01453"/>
<dbReference type="GeneID" id="41356154"/>
<dbReference type="KEGG" id="eel:EUBELI_01453"/>
<dbReference type="eggNOG" id="COG1219">
    <property type="taxonomic scope" value="Bacteria"/>
</dbReference>
<dbReference type="HOGENOM" id="CLU_014218_8_2_9"/>
<dbReference type="Proteomes" id="UP000001476">
    <property type="component" value="Chromosome"/>
</dbReference>
<dbReference type="GO" id="GO:0009376">
    <property type="term" value="C:HslUV protease complex"/>
    <property type="evidence" value="ECO:0007669"/>
    <property type="project" value="TreeGrafter"/>
</dbReference>
<dbReference type="GO" id="GO:0005524">
    <property type="term" value="F:ATP binding"/>
    <property type="evidence" value="ECO:0007669"/>
    <property type="project" value="UniProtKB-UniRule"/>
</dbReference>
<dbReference type="GO" id="GO:0016887">
    <property type="term" value="F:ATP hydrolysis activity"/>
    <property type="evidence" value="ECO:0007669"/>
    <property type="project" value="InterPro"/>
</dbReference>
<dbReference type="GO" id="GO:0140662">
    <property type="term" value="F:ATP-dependent protein folding chaperone"/>
    <property type="evidence" value="ECO:0007669"/>
    <property type="project" value="InterPro"/>
</dbReference>
<dbReference type="GO" id="GO:0046983">
    <property type="term" value="F:protein dimerization activity"/>
    <property type="evidence" value="ECO:0007669"/>
    <property type="project" value="InterPro"/>
</dbReference>
<dbReference type="GO" id="GO:0051082">
    <property type="term" value="F:unfolded protein binding"/>
    <property type="evidence" value="ECO:0007669"/>
    <property type="project" value="UniProtKB-UniRule"/>
</dbReference>
<dbReference type="GO" id="GO:0008270">
    <property type="term" value="F:zinc ion binding"/>
    <property type="evidence" value="ECO:0007669"/>
    <property type="project" value="InterPro"/>
</dbReference>
<dbReference type="GO" id="GO:0051301">
    <property type="term" value="P:cell division"/>
    <property type="evidence" value="ECO:0007669"/>
    <property type="project" value="TreeGrafter"/>
</dbReference>
<dbReference type="GO" id="GO:0051603">
    <property type="term" value="P:proteolysis involved in protein catabolic process"/>
    <property type="evidence" value="ECO:0007669"/>
    <property type="project" value="TreeGrafter"/>
</dbReference>
<dbReference type="CDD" id="cd19497">
    <property type="entry name" value="RecA-like_ClpX"/>
    <property type="match status" value="1"/>
</dbReference>
<dbReference type="FunFam" id="1.10.8.60:FF:000002">
    <property type="entry name" value="ATP-dependent Clp protease ATP-binding subunit ClpX"/>
    <property type="match status" value="1"/>
</dbReference>
<dbReference type="FunFam" id="3.40.50.300:FF:000005">
    <property type="entry name" value="ATP-dependent Clp protease ATP-binding subunit ClpX"/>
    <property type="match status" value="1"/>
</dbReference>
<dbReference type="Gene3D" id="1.10.8.60">
    <property type="match status" value="1"/>
</dbReference>
<dbReference type="Gene3D" id="6.20.220.10">
    <property type="entry name" value="ClpX chaperone, C4-type zinc finger domain"/>
    <property type="match status" value="1"/>
</dbReference>
<dbReference type="Gene3D" id="3.40.50.300">
    <property type="entry name" value="P-loop containing nucleotide triphosphate hydrolases"/>
    <property type="match status" value="1"/>
</dbReference>
<dbReference type="HAMAP" id="MF_00175">
    <property type="entry name" value="ClpX"/>
    <property type="match status" value="1"/>
</dbReference>
<dbReference type="InterPro" id="IPR003593">
    <property type="entry name" value="AAA+_ATPase"/>
</dbReference>
<dbReference type="InterPro" id="IPR050052">
    <property type="entry name" value="ATP-dep_Clp_protease_ClpX"/>
</dbReference>
<dbReference type="InterPro" id="IPR003959">
    <property type="entry name" value="ATPase_AAA_core"/>
</dbReference>
<dbReference type="InterPro" id="IPR019489">
    <property type="entry name" value="Clp_ATPase_C"/>
</dbReference>
<dbReference type="InterPro" id="IPR004487">
    <property type="entry name" value="Clp_protease_ATP-bd_su_ClpX"/>
</dbReference>
<dbReference type="InterPro" id="IPR046425">
    <property type="entry name" value="ClpX_bact"/>
</dbReference>
<dbReference type="InterPro" id="IPR027417">
    <property type="entry name" value="P-loop_NTPase"/>
</dbReference>
<dbReference type="InterPro" id="IPR010603">
    <property type="entry name" value="Znf_CppX_C4"/>
</dbReference>
<dbReference type="InterPro" id="IPR038366">
    <property type="entry name" value="Znf_CppX_C4_sf"/>
</dbReference>
<dbReference type="NCBIfam" id="TIGR00382">
    <property type="entry name" value="clpX"/>
    <property type="match status" value="1"/>
</dbReference>
<dbReference type="NCBIfam" id="NF003745">
    <property type="entry name" value="PRK05342.1"/>
    <property type="match status" value="1"/>
</dbReference>
<dbReference type="PANTHER" id="PTHR48102:SF7">
    <property type="entry name" value="ATP-DEPENDENT CLP PROTEASE ATP-BINDING SUBUNIT CLPX-LIKE, MITOCHONDRIAL"/>
    <property type="match status" value="1"/>
</dbReference>
<dbReference type="PANTHER" id="PTHR48102">
    <property type="entry name" value="ATP-DEPENDENT CLP PROTEASE ATP-BINDING SUBUNIT CLPX-LIKE, MITOCHONDRIAL-RELATED"/>
    <property type="match status" value="1"/>
</dbReference>
<dbReference type="Pfam" id="PF07724">
    <property type="entry name" value="AAA_2"/>
    <property type="match status" value="1"/>
</dbReference>
<dbReference type="Pfam" id="PF10431">
    <property type="entry name" value="ClpB_D2-small"/>
    <property type="match status" value="1"/>
</dbReference>
<dbReference type="Pfam" id="PF06689">
    <property type="entry name" value="zf-C4_ClpX"/>
    <property type="match status" value="1"/>
</dbReference>
<dbReference type="SMART" id="SM00382">
    <property type="entry name" value="AAA"/>
    <property type="match status" value="1"/>
</dbReference>
<dbReference type="SMART" id="SM01086">
    <property type="entry name" value="ClpB_D2-small"/>
    <property type="match status" value="1"/>
</dbReference>
<dbReference type="SMART" id="SM00994">
    <property type="entry name" value="zf-C4_ClpX"/>
    <property type="match status" value="1"/>
</dbReference>
<dbReference type="SUPFAM" id="SSF57716">
    <property type="entry name" value="Glucocorticoid receptor-like (DNA-binding domain)"/>
    <property type="match status" value="1"/>
</dbReference>
<dbReference type="SUPFAM" id="SSF52540">
    <property type="entry name" value="P-loop containing nucleoside triphosphate hydrolases"/>
    <property type="match status" value="1"/>
</dbReference>
<dbReference type="PROSITE" id="PS51902">
    <property type="entry name" value="CLPX_ZB"/>
    <property type="match status" value="1"/>
</dbReference>
<sequence length="422" mass="46767">MAGRNIDEKLRCSFCNKTQDQVKKLIAGHNGVYICDECVEICSDILDEEFETEADAKEVVDGMNINLLKPKQIKEFLDDYVIGQDEAKKVLAVAVYNHYKRIMSQSDLDVELQKSNILMLGPTGSGKTFLAQNLARLLNVPFAIADATTLTEAGYVGEDVENILLKLIQAADYDVEKAQYGIIYIDEIDKITKKSENVSITRDVSGEGVQQALLKILEGTIASVPPQGGRKHPQQELIPIDTTNILFICGGAFDGLEKIIESRMDKSSIGFNSELKEKSNDDVGEMFHKALPQDLIKFGLIPEFVGRVPVVVSLDSLDEEALVRILKEPKNAIIKQYQALFGLDEVALEFTDEAVEAVAHKSFERKTGARGLRSILESVMNEVMYEIPSDETISKCIITKEAVEGSAKPLLEYRTDAVKKAQ</sequence>